<reference key="1">
    <citation type="journal article" date="1989" name="J. Bacteriol.">
        <title>Identification and sequence analysis of two related flagellin genes in Rhizobium meliloti.</title>
        <authorList>
            <person name="Pleier E."/>
            <person name="Schmitt R."/>
        </authorList>
    </citation>
    <scope>NUCLEOTIDE SEQUENCE [GENOMIC DNA]</scope>
    <source>
        <strain>RU10406</strain>
    </source>
</reference>
<reference key="2">
    <citation type="submission" date="1995-12" db="EMBL/GenBank/DDBJ databases">
        <authorList>
            <person name="Platzer J."/>
            <person name="Schmitt R."/>
        </authorList>
    </citation>
    <scope>NUCLEOTIDE SEQUENCE [GENOMIC DNA]</scope>
    <source>
        <strain>RU11/001</strain>
    </source>
</reference>
<reference key="3">
    <citation type="submission" date="2001-01" db="EMBL/GenBank/DDBJ databases">
        <authorList>
            <person name="Schmitt R."/>
        </authorList>
    </citation>
    <scope>SEQUENCE REVISION TO 16-17</scope>
</reference>
<proteinExistence type="evidence at protein level"/>
<organism>
    <name type="scientific">Rhizobium meliloti</name>
    <name type="common">Ensifer meliloti</name>
    <name type="synonym">Sinorhizobium meliloti</name>
    <dbReference type="NCBI Taxonomy" id="382"/>
    <lineage>
        <taxon>Bacteria</taxon>
        <taxon>Pseudomonadati</taxon>
        <taxon>Pseudomonadota</taxon>
        <taxon>Alphaproteobacteria</taxon>
        <taxon>Hyphomicrobiales</taxon>
        <taxon>Rhizobiaceae</taxon>
        <taxon>Sinorhizobium/Ensifer group</taxon>
        <taxon>Sinorhizobium</taxon>
    </lineage>
</organism>
<evidence type="ECO:0000305" key="1"/>
<protein>
    <recommendedName>
        <fullName>Flagellin A</fullName>
    </recommendedName>
</protein>
<comment type="function">
    <text>Flagellin is the subunit protein which polymerizes to form the filaments of bacterial flagella. Homomer of FlaA is able to form a functional filament.</text>
</comment>
<comment type="subcellular location">
    <subcellularLocation>
        <location>Secreted</location>
    </subcellularLocation>
    <subcellularLocation>
        <location>Bacterial flagellum</location>
    </subcellularLocation>
</comment>
<comment type="similarity">
    <text evidence="1">Belongs to the bacterial flagellin family.</text>
</comment>
<name>FLAA_RHIML</name>
<dbReference type="EMBL" id="M24526">
    <property type="protein sequence ID" value="AAA26277.1"/>
    <property type="molecule type" value="Genomic_DNA"/>
</dbReference>
<dbReference type="EMBL" id="L49337">
    <property type="protein sequence ID" value="AAB81420.2"/>
    <property type="molecule type" value="Genomic_DNA"/>
</dbReference>
<dbReference type="PIR" id="A32808">
    <property type="entry name" value="A32808"/>
</dbReference>
<dbReference type="PDB" id="7SN9">
    <property type="method" value="EM"/>
    <property type="resolution" value="3.50 A"/>
    <property type="chains" value="A/B/C/D/E/F/G/H/I/J/K/L/M/N/O/P/Q/R/S/T/U/V/W/X/Y/Z/a/b/c/d=1-395"/>
</dbReference>
<dbReference type="PDBsum" id="7SN9"/>
<dbReference type="EMDB" id="EMD-25215"/>
<dbReference type="SMR" id="P13118"/>
<dbReference type="STRING" id="382.DU99_03420"/>
<dbReference type="GO" id="GO:0009288">
    <property type="term" value="C:bacterial-type flagellum"/>
    <property type="evidence" value="ECO:0007669"/>
    <property type="project" value="UniProtKB-SubCell"/>
</dbReference>
<dbReference type="GO" id="GO:0005576">
    <property type="term" value="C:extracellular region"/>
    <property type="evidence" value="ECO:0007669"/>
    <property type="project" value="UniProtKB-SubCell"/>
</dbReference>
<dbReference type="GO" id="GO:0005198">
    <property type="term" value="F:structural molecule activity"/>
    <property type="evidence" value="ECO:0007669"/>
    <property type="project" value="InterPro"/>
</dbReference>
<dbReference type="Gene3D" id="1.20.1330.10">
    <property type="entry name" value="f41 fragment of flagellin, N-terminal domain"/>
    <property type="match status" value="2"/>
</dbReference>
<dbReference type="InterPro" id="IPR001492">
    <property type="entry name" value="Flagellin"/>
</dbReference>
<dbReference type="InterPro" id="IPR046358">
    <property type="entry name" value="Flagellin_C"/>
</dbReference>
<dbReference type="InterPro" id="IPR001029">
    <property type="entry name" value="Flagellin_N"/>
</dbReference>
<dbReference type="PANTHER" id="PTHR42792">
    <property type="entry name" value="FLAGELLIN"/>
    <property type="match status" value="1"/>
</dbReference>
<dbReference type="PANTHER" id="PTHR42792:SF2">
    <property type="entry name" value="FLAGELLIN"/>
    <property type="match status" value="1"/>
</dbReference>
<dbReference type="Pfam" id="PF00700">
    <property type="entry name" value="Flagellin_C"/>
    <property type="match status" value="1"/>
</dbReference>
<dbReference type="Pfam" id="PF00669">
    <property type="entry name" value="Flagellin_N"/>
    <property type="match status" value="1"/>
</dbReference>
<dbReference type="PRINTS" id="PR00207">
    <property type="entry name" value="FLAGELLIN"/>
</dbReference>
<dbReference type="SUPFAM" id="SSF64518">
    <property type="entry name" value="Phase 1 flagellin"/>
    <property type="match status" value="1"/>
</dbReference>
<gene>
    <name type="primary">flaA</name>
</gene>
<sequence>MTSILTNNSAMAALSTLRSISSSMEDTQSRISSGLRVGSASDNAAYWSIATTMRSDNQALSAVQDALGLGAAKVDTAYSGMESAIEVVKEIKAKLVAATEDGVDKAKIQEEITQLKDQLTSIADAASFSGENWLQADLSGGAVTKSVVGSFVRDGSGSVAVKKVDYSLNANSVLFDTVGDTGILDKVYNVSQASVTLTVNTNGVESQHTVAAYSLESLTEAGAEFQGNYALQGGNSYVKVENVWVRAETAATGATGQEIAATTTAAGTITADSWVVDVGNAPAANVSAGQSVANINIVGMGAAALDALISGVDAALTDMTSAAASLGSISSRIDLQSEFVNKLSDSIESGVGRLVDADMNEESTRLKALQTQQQLAIQALSIANSDSQNVLSLFR</sequence>
<feature type="chain" id="PRO_0000182622" description="Flagellin A">
    <location>
        <begin position="1"/>
        <end position="395"/>
    </location>
</feature>
<feature type="sequence conflict" description="In Ref. 1; AAA26277." evidence="1" ref="1">
    <original>TL</original>
    <variation>GV</variation>
    <location>
        <begin position="16"/>
        <end position="17"/>
    </location>
</feature>
<keyword id="KW-0002">3D-structure</keyword>
<keyword id="KW-0975">Bacterial flagellum</keyword>
<keyword id="KW-0964">Secreted</keyword>
<accession>P13118</accession>